<sequence>MITSSLPLTDLHRHLDGNIRTQTILELGQKFGVKLPANTLQTLTPYVQIVEAEPSLVAFLSKLDWGVAVLGDLDACRRVAYENVEDALNARIDYAELRFSPYYMAMKHSLPVTGVVEAVVDGVRAGVRDFGIQANLIGIMSRTFGTDACQQELDAILSQKNHIVAVDLAGDELGQPGDRFIQHFKQVRDAGLHVTVHAGEAAGPESMWQAIRDLGATRIGHGVKAIHDPKLMDYLAQHRIGIESCLTSNLQTSTVDSLATHPLKRFLEHGILACINTDDPAVEGIELPYEYEVAAPQAGLSQEQIRQAQLNGLELAFLSDSEKKALLAKAALRG</sequence>
<protein>
    <recommendedName>
        <fullName evidence="1">Adenosine deaminase</fullName>
        <ecNumber evidence="1">3.5.4.4</ecNumber>
    </recommendedName>
    <alternativeName>
        <fullName evidence="1">Adenosine aminohydrolase</fullName>
    </alternativeName>
</protein>
<name>ADD_VIBCH</name>
<proteinExistence type="evidence at protein level"/>
<reference key="1">
    <citation type="journal article" date="2000" name="Nature">
        <title>DNA sequence of both chromosomes of the cholera pathogen Vibrio cholerae.</title>
        <authorList>
            <person name="Heidelberg J.F."/>
            <person name="Eisen J.A."/>
            <person name="Nelson W.C."/>
            <person name="Clayton R.A."/>
            <person name="Gwinn M.L."/>
            <person name="Dodson R.J."/>
            <person name="Haft D.H."/>
            <person name="Hickey E.K."/>
            <person name="Peterson J.D."/>
            <person name="Umayam L.A."/>
            <person name="Gill S.R."/>
            <person name="Nelson K.E."/>
            <person name="Read T.D."/>
            <person name="Tettelin H."/>
            <person name="Richardson D.L."/>
            <person name="Ermolaeva M.D."/>
            <person name="Vamathevan J.J."/>
            <person name="Bass S."/>
            <person name="Qin H."/>
            <person name="Dragoi I."/>
            <person name="Sellers P."/>
            <person name="McDonald L.A."/>
            <person name="Utterback T.R."/>
            <person name="Fleischmann R.D."/>
            <person name="Nierman W.C."/>
            <person name="White O."/>
            <person name="Salzberg S.L."/>
            <person name="Smith H.O."/>
            <person name="Colwell R.R."/>
            <person name="Mekalanos J.J."/>
            <person name="Venter J.C."/>
            <person name="Fraser C.M."/>
        </authorList>
    </citation>
    <scope>NUCLEOTIDE SEQUENCE [LARGE SCALE GENOMIC DNA]</scope>
    <source>
        <strain>ATCC 39315 / El Tor Inaba N16961</strain>
    </source>
</reference>
<reference evidence="3" key="2">
    <citation type="submission" date="2018-11" db="PDB data bank">
        <title>Crystal structure of adenosine deaminase from Vibrio cholerae complexed with pentostatin (deoxycoformycin) (CASP target).</title>
        <authorList>
            <person name="Maltseva N."/>
            <person name="Kim Y."/>
            <person name="Endres M."/>
            <person name="Welk L."/>
            <person name="Joachimiak A."/>
        </authorList>
    </citation>
    <scope>X-RAY CRYSTALLOGRAPHY (2.05 ANGSTROMS) IN COMPLEX WITH PENTOSTATIN AND ZINC</scope>
    <scope>COFACTOR</scope>
</reference>
<evidence type="ECO:0000255" key="1">
    <source>
        <dbReference type="HAMAP-Rule" id="MF_00540"/>
    </source>
</evidence>
<evidence type="ECO:0000269" key="2">
    <source ref="2"/>
</evidence>
<evidence type="ECO:0007744" key="3">
    <source>
        <dbReference type="PDB" id="6N91"/>
    </source>
</evidence>
<evidence type="ECO:0007829" key="4">
    <source>
        <dbReference type="PDB" id="6N91"/>
    </source>
</evidence>
<dbReference type="EC" id="3.5.4.4" evidence="1"/>
<dbReference type="EMBL" id="AE003852">
    <property type="protein sequence ID" value="AAF95890.1"/>
    <property type="molecule type" value="Genomic_DNA"/>
</dbReference>
<dbReference type="PIR" id="F82038">
    <property type="entry name" value="F82038"/>
</dbReference>
<dbReference type="RefSeq" id="NP_232377.1">
    <property type="nucleotide sequence ID" value="NC_002505.1"/>
</dbReference>
<dbReference type="RefSeq" id="WP_000633281.1">
    <property type="nucleotide sequence ID" value="NZ_LT906614.1"/>
</dbReference>
<dbReference type="PDB" id="6N91">
    <property type="method" value="X-ray"/>
    <property type="resolution" value="2.05 A"/>
    <property type="chains" value="A/B=1-334"/>
</dbReference>
<dbReference type="PDBsum" id="6N91"/>
<dbReference type="SMR" id="Q9KNI7"/>
<dbReference type="STRING" id="243277.VC_2751"/>
<dbReference type="DNASU" id="2614914"/>
<dbReference type="EnsemblBacteria" id="AAF95890">
    <property type="protein sequence ID" value="AAF95890"/>
    <property type="gene ID" value="VC_2751"/>
</dbReference>
<dbReference type="KEGG" id="vch:VC_2751"/>
<dbReference type="PATRIC" id="fig|243277.26.peg.2627"/>
<dbReference type="eggNOG" id="COG1816">
    <property type="taxonomic scope" value="Bacteria"/>
</dbReference>
<dbReference type="HOGENOM" id="CLU_039228_0_2_6"/>
<dbReference type="Proteomes" id="UP000000584">
    <property type="component" value="Chromosome 1"/>
</dbReference>
<dbReference type="GO" id="GO:0005829">
    <property type="term" value="C:cytosol"/>
    <property type="evidence" value="ECO:0000318"/>
    <property type="project" value="GO_Central"/>
</dbReference>
<dbReference type="GO" id="GO:0046936">
    <property type="term" value="F:2'-deoxyadenosine deaminase activity"/>
    <property type="evidence" value="ECO:0007669"/>
    <property type="project" value="RHEA"/>
</dbReference>
<dbReference type="GO" id="GO:0004000">
    <property type="term" value="F:adenosine deaminase activity"/>
    <property type="evidence" value="ECO:0000318"/>
    <property type="project" value="GO_Central"/>
</dbReference>
<dbReference type="GO" id="GO:0008270">
    <property type="term" value="F:zinc ion binding"/>
    <property type="evidence" value="ECO:0007669"/>
    <property type="project" value="UniProtKB-UniRule"/>
</dbReference>
<dbReference type="GO" id="GO:0006154">
    <property type="term" value="P:adenosine catabolic process"/>
    <property type="evidence" value="ECO:0000318"/>
    <property type="project" value="GO_Central"/>
</dbReference>
<dbReference type="GO" id="GO:0043103">
    <property type="term" value="P:hypoxanthine salvage"/>
    <property type="evidence" value="ECO:0000318"/>
    <property type="project" value="GO_Central"/>
</dbReference>
<dbReference type="GO" id="GO:0046103">
    <property type="term" value="P:inosine biosynthetic process"/>
    <property type="evidence" value="ECO:0000318"/>
    <property type="project" value="GO_Central"/>
</dbReference>
<dbReference type="GO" id="GO:0009117">
    <property type="term" value="P:nucleotide metabolic process"/>
    <property type="evidence" value="ECO:0007669"/>
    <property type="project" value="UniProtKB-KW"/>
</dbReference>
<dbReference type="GO" id="GO:0009168">
    <property type="term" value="P:purine ribonucleoside monophosphate biosynthetic process"/>
    <property type="evidence" value="ECO:0007669"/>
    <property type="project" value="UniProtKB-UniRule"/>
</dbReference>
<dbReference type="FunFam" id="3.20.20.140:FF:000009">
    <property type="entry name" value="Adenosine deaminase"/>
    <property type="match status" value="1"/>
</dbReference>
<dbReference type="Gene3D" id="3.20.20.140">
    <property type="entry name" value="Metal-dependent hydrolases"/>
    <property type="match status" value="1"/>
</dbReference>
<dbReference type="HAMAP" id="MF_00540">
    <property type="entry name" value="A_deaminase"/>
    <property type="match status" value="1"/>
</dbReference>
<dbReference type="InterPro" id="IPR028893">
    <property type="entry name" value="A_deaminase"/>
</dbReference>
<dbReference type="InterPro" id="IPR001365">
    <property type="entry name" value="A_deaminase_dom"/>
</dbReference>
<dbReference type="InterPro" id="IPR006330">
    <property type="entry name" value="Ado/ade_deaminase"/>
</dbReference>
<dbReference type="InterPro" id="IPR032466">
    <property type="entry name" value="Metal_Hydrolase"/>
</dbReference>
<dbReference type="NCBIfam" id="TIGR01430">
    <property type="entry name" value="aden_deam"/>
    <property type="match status" value="1"/>
</dbReference>
<dbReference type="NCBIfam" id="NF006846">
    <property type="entry name" value="PRK09358.1-1"/>
    <property type="match status" value="1"/>
</dbReference>
<dbReference type="PANTHER" id="PTHR11409">
    <property type="entry name" value="ADENOSINE DEAMINASE"/>
    <property type="match status" value="1"/>
</dbReference>
<dbReference type="PANTHER" id="PTHR11409:SF43">
    <property type="entry name" value="ADENOSINE DEAMINASE"/>
    <property type="match status" value="1"/>
</dbReference>
<dbReference type="Pfam" id="PF00962">
    <property type="entry name" value="A_deaminase"/>
    <property type="match status" value="1"/>
</dbReference>
<dbReference type="SUPFAM" id="SSF51556">
    <property type="entry name" value="Metallo-dependent hydrolases"/>
    <property type="match status" value="1"/>
</dbReference>
<comment type="function">
    <text evidence="1">Catalyzes the hydrolytic deamination of adenosine and 2-deoxyadenosine.</text>
</comment>
<comment type="catalytic activity">
    <reaction evidence="1">
        <text>adenosine + H2O + H(+) = inosine + NH4(+)</text>
        <dbReference type="Rhea" id="RHEA:24408"/>
        <dbReference type="ChEBI" id="CHEBI:15377"/>
        <dbReference type="ChEBI" id="CHEBI:15378"/>
        <dbReference type="ChEBI" id="CHEBI:16335"/>
        <dbReference type="ChEBI" id="CHEBI:17596"/>
        <dbReference type="ChEBI" id="CHEBI:28938"/>
        <dbReference type="EC" id="3.5.4.4"/>
    </reaction>
    <physiologicalReaction direction="left-to-right" evidence="1">
        <dbReference type="Rhea" id="RHEA:24409"/>
    </physiologicalReaction>
</comment>
<comment type="catalytic activity">
    <reaction evidence="1">
        <text>2'-deoxyadenosine + H2O + H(+) = 2'-deoxyinosine + NH4(+)</text>
        <dbReference type="Rhea" id="RHEA:28190"/>
        <dbReference type="ChEBI" id="CHEBI:15377"/>
        <dbReference type="ChEBI" id="CHEBI:15378"/>
        <dbReference type="ChEBI" id="CHEBI:17256"/>
        <dbReference type="ChEBI" id="CHEBI:28938"/>
        <dbReference type="ChEBI" id="CHEBI:28997"/>
        <dbReference type="EC" id="3.5.4.4"/>
    </reaction>
    <physiologicalReaction direction="left-to-right" evidence="1">
        <dbReference type="Rhea" id="RHEA:28191"/>
    </physiologicalReaction>
</comment>
<comment type="cofactor">
    <cofactor evidence="1">
        <name>Zn(2+)</name>
        <dbReference type="ChEBI" id="CHEBI:29105"/>
    </cofactor>
    <text evidence="1 2">Binds 1 zinc ion per subunit.</text>
</comment>
<comment type="similarity">
    <text evidence="1">Belongs to the metallo-dependent hydrolases superfamily. Adenosine and AMP deaminases family. Adenosine deaminase subfamily.</text>
</comment>
<keyword id="KW-0002">3D-structure</keyword>
<keyword id="KW-0378">Hydrolase</keyword>
<keyword id="KW-0479">Metal-binding</keyword>
<keyword id="KW-0546">Nucleotide metabolism</keyword>
<keyword id="KW-1185">Reference proteome</keyword>
<keyword id="KW-0862">Zinc</keyword>
<accession>Q9KNI7</accession>
<feature type="chain" id="PRO_0000194397" description="Adenosine deaminase">
    <location>
        <begin position="1"/>
        <end position="334"/>
    </location>
</feature>
<feature type="active site" description="Proton donor" evidence="1">
    <location>
        <position position="200"/>
    </location>
</feature>
<feature type="binding site" evidence="1 2 3">
    <location>
        <position position="12"/>
    </location>
    <ligand>
        <name>Zn(2+)</name>
        <dbReference type="ChEBI" id="CHEBI:29105"/>
        <note>catalytic</note>
    </ligand>
</feature>
<feature type="binding site" evidence="2 3">
    <location>
        <begin position="14"/>
        <end position="16"/>
    </location>
    <ligand>
        <name>pentostatin</name>
        <dbReference type="ChEBI" id="CHEBI:229687"/>
        <note>inhibitor</note>
    </ligand>
</feature>
<feature type="binding site" evidence="1">
    <location>
        <position position="14"/>
    </location>
    <ligand>
        <name>substrate</name>
    </ligand>
</feature>
<feature type="binding site" evidence="1 2 3">
    <location>
        <position position="14"/>
    </location>
    <ligand>
        <name>Zn(2+)</name>
        <dbReference type="ChEBI" id="CHEBI:29105"/>
        <note>catalytic</note>
    </ligand>
</feature>
<feature type="binding site" evidence="1">
    <location>
        <position position="16"/>
    </location>
    <ligand>
        <name>substrate</name>
    </ligand>
</feature>
<feature type="binding site" evidence="2 3">
    <location>
        <position position="141"/>
    </location>
    <ligand>
        <name>pentostatin</name>
        <dbReference type="ChEBI" id="CHEBI:229687"/>
        <note>inhibitor</note>
    </ligand>
</feature>
<feature type="binding site" evidence="2 3">
    <location>
        <position position="170"/>
    </location>
    <ligand>
        <name>pentostatin</name>
        <dbReference type="ChEBI" id="CHEBI:229687"/>
        <note>inhibitor</note>
    </ligand>
</feature>
<feature type="binding site" evidence="1">
    <location>
        <position position="170"/>
    </location>
    <ligand>
        <name>substrate</name>
    </ligand>
</feature>
<feature type="binding site" evidence="1 2 3">
    <location>
        <position position="197"/>
    </location>
    <ligand>
        <name>Zn(2+)</name>
        <dbReference type="ChEBI" id="CHEBI:29105"/>
        <note>catalytic</note>
    </ligand>
</feature>
<feature type="binding site" evidence="2 3">
    <location>
        <position position="200"/>
    </location>
    <ligand>
        <name>pentostatin</name>
        <dbReference type="ChEBI" id="CHEBI:229687"/>
        <note>inhibitor</note>
    </ligand>
</feature>
<feature type="binding site" evidence="2 3">
    <location>
        <position position="221"/>
    </location>
    <ligand>
        <name>pentostatin</name>
        <dbReference type="ChEBI" id="CHEBI:229687"/>
        <note>inhibitor</note>
    </ligand>
</feature>
<feature type="binding site" evidence="2 3">
    <location>
        <position position="278"/>
    </location>
    <ligand>
        <name>pentostatin</name>
        <dbReference type="ChEBI" id="CHEBI:229687"/>
        <note>inhibitor</note>
    </ligand>
</feature>
<feature type="binding site" evidence="1 2 3">
    <location>
        <position position="278"/>
    </location>
    <ligand>
        <name>Zn(2+)</name>
        <dbReference type="ChEBI" id="CHEBI:29105"/>
        <note>catalytic</note>
    </ligand>
</feature>
<feature type="binding site" evidence="1">
    <location>
        <position position="279"/>
    </location>
    <ligand>
        <name>substrate</name>
    </ligand>
</feature>
<feature type="site" description="Important for catalytic activity" evidence="1">
    <location>
        <position position="221"/>
    </location>
</feature>
<feature type="strand" evidence="4">
    <location>
        <begin position="9"/>
        <end position="14"/>
    </location>
</feature>
<feature type="helix" evidence="4">
    <location>
        <begin position="15"/>
        <end position="17"/>
    </location>
</feature>
<feature type="helix" evidence="4">
    <location>
        <begin position="21"/>
        <end position="31"/>
    </location>
</feature>
<feature type="helix" evidence="4">
    <location>
        <begin position="40"/>
        <end position="47"/>
    </location>
</feature>
<feature type="helix" evidence="4">
    <location>
        <begin position="56"/>
        <end position="60"/>
    </location>
</feature>
<feature type="helix" evidence="4">
    <location>
        <begin position="61"/>
        <end position="63"/>
    </location>
</feature>
<feature type="helix" evidence="4">
    <location>
        <begin position="64"/>
        <end position="68"/>
    </location>
</feature>
<feature type="helix" evidence="4">
    <location>
        <begin position="73"/>
        <end position="89"/>
    </location>
</feature>
<feature type="strand" evidence="4">
    <location>
        <begin position="93"/>
        <end position="99"/>
    </location>
</feature>
<feature type="helix" evidence="4">
    <location>
        <begin position="101"/>
        <end position="106"/>
    </location>
</feature>
<feature type="turn" evidence="4">
    <location>
        <begin position="107"/>
        <end position="109"/>
    </location>
</feature>
<feature type="helix" evidence="4">
    <location>
        <begin position="112"/>
        <end position="130"/>
    </location>
</feature>
<feature type="strand" evidence="4">
    <location>
        <begin position="133"/>
        <end position="141"/>
    </location>
</feature>
<feature type="helix" evidence="4">
    <location>
        <begin position="142"/>
        <end position="144"/>
    </location>
</feature>
<feature type="helix" evidence="4">
    <location>
        <begin position="146"/>
        <end position="157"/>
    </location>
</feature>
<feature type="helix" evidence="4">
    <location>
        <begin position="158"/>
        <end position="162"/>
    </location>
</feature>
<feature type="strand" evidence="4">
    <location>
        <begin position="165"/>
        <end position="170"/>
    </location>
</feature>
<feature type="turn" evidence="4">
    <location>
        <begin position="172"/>
        <end position="174"/>
    </location>
</feature>
<feature type="helix" evidence="4">
    <location>
        <begin position="177"/>
        <end position="180"/>
    </location>
</feature>
<feature type="helix" evidence="4">
    <location>
        <begin position="181"/>
        <end position="189"/>
    </location>
</feature>
<feature type="strand" evidence="4">
    <location>
        <begin position="193"/>
        <end position="202"/>
    </location>
</feature>
<feature type="helix" evidence="4">
    <location>
        <begin position="204"/>
        <end position="213"/>
    </location>
</feature>
<feature type="strand" evidence="4">
    <location>
        <begin position="217"/>
        <end position="221"/>
    </location>
</feature>
<feature type="helix" evidence="4">
    <location>
        <begin position="223"/>
        <end position="227"/>
    </location>
</feature>
<feature type="helix" evidence="4">
    <location>
        <begin position="229"/>
        <end position="238"/>
    </location>
</feature>
<feature type="strand" evidence="4">
    <location>
        <begin position="241"/>
        <end position="244"/>
    </location>
</feature>
<feature type="helix" evidence="4">
    <location>
        <begin position="246"/>
        <end position="251"/>
    </location>
</feature>
<feature type="strand" evidence="4">
    <location>
        <begin position="254"/>
        <end position="256"/>
    </location>
</feature>
<feature type="helix" evidence="4">
    <location>
        <begin position="258"/>
        <end position="260"/>
    </location>
</feature>
<feature type="helix" evidence="4">
    <location>
        <begin position="263"/>
        <end position="268"/>
    </location>
</feature>
<feature type="strand" evidence="4">
    <location>
        <begin position="273"/>
        <end position="275"/>
    </location>
</feature>
<feature type="helix" evidence="4">
    <location>
        <begin position="280"/>
        <end position="283"/>
    </location>
</feature>
<feature type="helix" evidence="4">
    <location>
        <begin position="287"/>
        <end position="292"/>
    </location>
</feature>
<feature type="helix" evidence="4">
    <location>
        <begin position="294"/>
        <end position="297"/>
    </location>
</feature>
<feature type="helix" evidence="4">
    <location>
        <begin position="302"/>
        <end position="315"/>
    </location>
</feature>
<feature type="strand" evidence="4">
    <location>
        <begin position="316"/>
        <end position="318"/>
    </location>
</feature>
<feature type="helix" evidence="4">
    <location>
        <begin position="320"/>
        <end position="331"/>
    </location>
</feature>
<gene>
    <name evidence="1" type="primary">add</name>
    <name type="ordered locus">VC_2751</name>
</gene>
<organism>
    <name type="scientific">Vibrio cholerae serotype O1 (strain ATCC 39315 / El Tor Inaba N16961)</name>
    <dbReference type="NCBI Taxonomy" id="243277"/>
    <lineage>
        <taxon>Bacteria</taxon>
        <taxon>Pseudomonadati</taxon>
        <taxon>Pseudomonadota</taxon>
        <taxon>Gammaproteobacteria</taxon>
        <taxon>Vibrionales</taxon>
        <taxon>Vibrionaceae</taxon>
        <taxon>Vibrio</taxon>
    </lineage>
</organism>